<name>MRAY_STAAR</name>
<feature type="chain" id="PRO_0000108893" description="Phospho-N-acetylmuramoyl-pentapeptide-transferase">
    <location>
        <begin position="1"/>
        <end position="321"/>
    </location>
</feature>
<feature type="transmembrane region" description="Helical" evidence="1">
    <location>
        <begin position="1"/>
        <end position="21"/>
    </location>
</feature>
<feature type="transmembrane region" description="Helical" evidence="1">
    <location>
        <begin position="50"/>
        <end position="70"/>
    </location>
</feature>
<feature type="transmembrane region" description="Helical" evidence="1">
    <location>
        <begin position="76"/>
        <end position="96"/>
    </location>
</feature>
<feature type="transmembrane region" description="Helical" evidence="1">
    <location>
        <begin position="112"/>
        <end position="132"/>
    </location>
</feature>
<feature type="transmembrane region" description="Helical" evidence="1">
    <location>
        <begin position="140"/>
        <end position="160"/>
    </location>
</feature>
<feature type="transmembrane region" description="Helical" evidence="1">
    <location>
        <begin position="176"/>
        <end position="196"/>
    </location>
</feature>
<feature type="transmembrane region" description="Helical" evidence="1">
    <location>
        <begin position="200"/>
        <end position="220"/>
    </location>
</feature>
<feature type="transmembrane region" description="Helical" evidence="1">
    <location>
        <begin position="225"/>
        <end position="245"/>
    </location>
</feature>
<feature type="transmembrane region" description="Helical" evidence="1">
    <location>
        <begin position="250"/>
        <end position="270"/>
    </location>
</feature>
<feature type="transmembrane region" description="Helical" evidence="1">
    <location>
        <begin position="300"/>
        <end position="320"/>
    </location>
</feature>
<dbReference type="EC" id="2.7.8.13" evidence="1"/>
<dbReference type="EMBL" id="BX571856">
    <property type="protein sequence ID" value="CAG40160.1"/>
    <property type="molecule type" value="Genomic_DNA"/>
</dbReference>
<dbReference type="RefSeq" id="WP_000578458.1">
    <property type="nucleotide sequence ID" value="NC_002952.2"/>
</dbReference>
<dbReference type="SMR" id="Q6GHQ3"/>
<dbReference type="KEGG" id="sar:SAR1158"/>
<dbReference type="HOGENOM" id="CLU_023982_0_1_9"/>
<dbReference type="UniPathway" id="UPA00219"/>
<dbReference type="Proteomes" id="UP000000596">
    <property type="component" value="Chromosome"/>
</dbReference>
<dbReference type="GO" id="GO:0005886">
    <property type="term" value="C:plasma membrane"/>
    <property type="evidence" value="ECO:0007669"/>
    <property type="project" value="UniProtKB-SubCell"/>
</dbReference>
<dbReference type="GO" id="GO:0046872">
    <property type="term" value="F:metal ion binding"/>
    <property type="evidence" value="ECO:0007669"/>
    <property type="project" value="UniProtKB-KW"/>
</dbReference>
<dbReference type="GO" id="GO:0008963">
    <property type="term" value="F:phospho-N-acetylmuramoyl-pentapeptide-transferase activity"/>
    <property type="evidence" value="ECO:0007669"/>
    <property type="project" value="UniProtKB-UniRule"/>
</dbReference>
<dbReference type="GO" id="GO:0051301">
    <property type="term" value="P:cell division"/>
    <property type="evidence" value="ECO:0007669"/>
    <property type="project" value="UniProtKB-KW"/>
</dbReference>
<dbReference type="GO" id="GO:0071555">
    <property type="term" value="P:cell wall organization"/>
    <property type="evidence" value="ECO:0007669"/>
    <property type="project" value="UniProtKB-KW"/>
</dbReference>
<dbReference type="GO" id="GO:0009252">
    <property type="term" value="P:peptidoglycan biosynthetic process"/>
    <property type="evidence" value="ECO:0007669"/>
    <property type="project" value="UniProtKB-UniRule"/>
</dbReference>
<dbReference type="GO" id="GO:0008360">
    <property type="term" value="P:regulation of cell shape"/>
    <property type="evidence" value="ECO:0007669"/>
    <property type="project" value="UniProtKB-KW"/>
</dbReference>
<dbReference type="CDD" id="cd06852">
    <property type="entry name" value="GT_MraY"/>
    <property type="match status" value="1"/>
</dbReference>
<dbReference type="HAMAP" id="MF_00038">
    <property type="entry name" value="MraY"/>
    <property type="match status" value="1"/>
</dbReference>
<dbReference type="InterPro" id="IPR000715">
    <property type="entry name" value="Glycosyl_transferase_4"/>
</dbReference>
<dbReference type="InterPro" id="IPR003524">
    <property type="entry name" value="PNAcMuramoyl-5peptid_Trfase"/>
</dbReference>
<dbReference type="InterPro" id="IPR018480">
    <property type="entry name" value="PNAcMuramoyl-5peptid_Trfase_CS"/>
</dbReference>
<dbReference type="NCBIfam" id="TIGR00445">
    <property type="entry name" value="mraY"/>
    <property type="match status" value="1"/>
</dbReference>
<dbReference type="PANTHER" id="PTHR22926">
    <property type="entry name" value="PHOSPHO-N-ACETYLMURAMOYL-PENTAPEPTIDE-TRANSFERASE"/>
    <property type="match status" value="1"/>
</dbReference>
<dbReference type="PANTHER" id="PTHR22926:SF5">
    <property type="entry name" value="PHOSPHO-N-ACETYLMURAMOYL-PENTAPEPTIDE-TRANSFERASE HOMOLOG"/>
    <property type="match status" value="1"/>
</dbReference>
<dbReference type="Pfam" id="PF00953">
    <property type="entry name" value="Glycos_transf_4"/>
    <property type="match status" value="1"/>
</dbReference>
<dbReference type="PROSITE" id="PS01347">
    <property type="entry name" value="MRAY_1"/>
    <property type="match status" value="1"/>
</dbReference>
<dbReference type="PROSITE" id="PS01348">
    <property type="entry name" value="MRAY_2"/>
    <property type="match status" value="1"/>
</dbReference>
<sequence>MIFVYALLALVITFVLVPVLIPTLKRMKFGQSIREEGPQSHMKKTGTPTMGGLTFLLSIVITSLVAIIFVDQANPIILLLFVTIGFGLIGFIDDYIIVVKKNNQGLTSKQKFLAQIGIAIIFFVLSNVFHLVNFSTSIHIPFTNVAIPLSFAYVIFIVFWQVGFSNAVNLTDGLDGLATGLSIIGFTMYAIMSFVLGETAIGIFCIIMLFALLGFLPYNINPAKVFMGDTGSLALGGIFATISIMLNQELSLIFIGLVFVIETLSVMLQVASFKLTGKRIFKMSPIHHHFELIGWSEWKVVTVFWAVGLISGLIGLWIGVH</sequence>
<reference key="1">
    <citation type="journal article" date="2004" name="Proc. Natl. Acad. Sci. U.S.A.">
        <title>Complete genomes of two clinical Staphylococcus aureus strains: evidence for the rapid evolution of virulence and drug resistance.</title>
        <authorList>
            <person name="Holden M.T.G."/>
            <person name="Feil E.J."/>
            <person name="Lindsay J.A."/>
            <person name="Peacock S.J."/>
            <person name="Day N.P.J."/>
            <person name="Enright M.C."/>
            <person name="Foster T.J."/>
            <person name="Moore C.E."/>
            <person name="Hurst L."/>
            <person name="Atkin R."/>
            <person name="Barron A."/>
            <person name="Bason N."/>
            <person name="Bentley S.D."/>
            <person name="Chillingworth C."/>
            <person name="Chillingworth T."/>
            <person name="Churcher C."/>
            <person name="Clark L."/>
            <person name="Corton C."/>
            <person name="Cronin A."/>
            <person name="Doggett J."/>
            <person name="Dowd L."/>
            <person name="Feltwell T."/>
            <person name="Hance Z."/>
            <person name="Harris B."/>
            <person name="Hauser H."/>
            <person name="Holroyd S."/>
            <person name="Jagels K."/>
            <person name="James K.D."/>
            <person name="Lennard N."/>
            <person name="Line A."/>
            <person name="Mayes R."/>
            <person name="Moule S."/>
            <person name="Mungall K."/>
            <person name="Ormond D."/>
            <person name="Quail M.A."/>
            <person name="Rabbinowitsch E."/>
            <person name="Rutherford K.M."/>
            <person name="Sanders M."/>
            <person name="Sharp S."/>
            <person name="Simmonds M."/>
            <person name="Stevens K."/>
            <person name="Whitehead S."/>
            <person name="Barrell B.G."/>
            <person name="Spratt B.G."/>
            <person name="Parkhill J."/>
        </authorList>
    </citation>
    <scope>NUCLEOTIDE SEQUENCE [LARGE SCALE GENOMIC DNA]</scope>
    <source>
        <strain>MRSA252</strain>
    </source>
</reference>
<comment type="function">
    <text evidence="1">Catalyzes the initial step of the lipid cycle reactions in the biosynthesis of the cell wall peptidoglycan: transfers peptidoglycan precursor phospho-MurNAc-pentapeptide from UDP-MurNAc-pentapeptide onto the lipid carrier undecaprenyl phosphate, yielding undecaprenyl-pyrophosphoryl-MurNAc-pentapeptide, known as lipid I.</text>
</comment>
<comment type="catalytic activity">
    <reaction evidence="1">
        <text>UDP-N-acetyl-alpha-D-muramoyl-L-alanyl-gamma-D-glutamyl-L-lysyl-D-alanyl-D-alanine + di-trans,octa-cis-undecaprenyl phosphate = Mur2Ac(oyl-L-Ala-gamma-D-Glu-L-Lys-D-Ala-D-Ala)-di-trans,octa-cis-undecaprenyl diphosphate + UMP</text>
        <dbReference type="Rhea" id="RHEA:21920"/>
        <dbReference type="ChEBI" id="CHEBI:57865"/>
        <dbReference type="ChEBI" id="CHEBI:60032"/>
        <dbReference type="ChEBI" id="CHEBI:60392"/>
        <dbReference type="ChEBI" id="CHEBI:70758"/>
        <dbReference type="EC" id="2.7.8.13"/>
    </reaction>
</comment>
<comment type="cofactor">
    <cofactor evidence="1">
        <name>Mg(2+)</name>
        <dbReference type="ChEBI" id="CHEBI:18420"/>
    </cofactor>
</comment>
<comment type="pathway">
    <text evidence="1">Cell wall biogenesis; peptidoglycan biosynthesis.</text>
</comment>
<comment type="subcellular location">
    <subcellularLocation>
        <location evidence="1">Cell membrane</location>
        <topology evidence="1">Multi-pass membrane protein</topology>
    </subcellularLocation>
</comment>
<comment type="similarity">
    <text evidence="1 2">Belongs to the glycosyltransferase 4 family. MraY subfamily.</text>
</comment>
<accession>Q6GHQ3</accession>
<evidence type="ECO:0000255" key="1">
    <source>
        <dbReference type="HAMAP-Rule" id="MF_00038"/>
    </source>
</evidence>
<evidence type="ECO:0000305" key="2"/>
<proteinExistence type="inferred from homology"/>
<gene>
    <name evidence="1" type="primary">mraY</name>
    <name type="ordered locus">SAR1158</name>
</gene>
<protein>
    <recommendedName>
        <fullName evidence="1">Phospho-N-acetylmuramoyl-pentapeptide-transferase</fullName>
        <ecNumber evidence="1">2.7.8.13</ecNumber>
    </recommendedName>
    <alternativeName>
        <fullName evidence="1">UDP-MurNAc-pentapeptide phosphotransferase</fullName>
    </alternativeName>
</protein>
<organism>
    <name type="scientific">Staphylococcus aureus (strain MRSA252)</name>
    <dbReference type="NCBI Taxonomy" id="282458"/>
    <lineage>
        <taxon>Bacteria</taxon>
        <taxon>Bacillati</taxon>
        <taxon>Bacillota</taxon>
        <taxon>Bacilli</taxon>
        <taxon>Bacillales</taxon>
        <taxon>Staphylococcaceae</taxon>
        <taxon>Staphylococcus</taxon>
    </lineage>
</organism>
<keyword id="KW-0131">Cell cycle</keyword>
<keyword id="KW-0132">Cell division</keyword>
<keyword id="KW-1003">Cell membrane</keyword>
<keyword id="KW-0133">Cell shape</keyword>
<keyword id="KW-0961">Cell wall biogenesis/degradation</keyword>
<keyword id="KW-0460">Magnesium</keyword>
<keyword id="KW-0472">Membrane</keyword>
<keyword id="KW-0479">Metal-binding</keyword>
<keyword id="KW-0573">Peptidoglycan synthesis</keyword>
<keyword id="KW-0808">Transferase</keyword>
<keyword id="KW-0812">Transmembrane</keyword>
<keyword id="KW-1133">Transmembrane helix</keyword>